<reference key="1">
    <citation type="journal article" date="2007" name="Nat. Biotechnol.">
        <title>Genome sequencing and analysis of the versatile cell factory Aspergillus niger CBS 513.88.</title>
        <authorList>
            <person name="Pel H.J."/>
            <person name="de Winde J.H."/>
            <person name="Archer D.B."/>
            <person name="Dyer P.S."/>
            <person name="Hofmann G."/>
            <person name="Schaap P.J."/>
            <person name="Turner G."/>
            <person name="de Vries R.P."/>
            <person name="Albang R."/>
            <person name="Albermann K."/>
            <person name="Andersen M.R."/>
            <person name="Bendtsen J.D."/>
            <person name="Benen J.A.E."/>
            <person name="van den Berg M."/>
            <person name="Breestraat S."/>
            <person name="Caddick M.X."/>
            <person name="Contreras R."/>
            <person name="Cornell M."/>
            <person name="Coutinho P.M."/>
            <person name="Danchin E.G.J."/>
            <person name="Debets A.J.M."/>
            <person name="Dekker P."/>
            <person name="van Dijck P.W.M."/>
            <person name="van Dijk A."/>
            <person name="Dijkhuizen L."/>
            <person name="Driessen A.J.M."/>
            <person name="d'Enfert C."/>
            <person name="Geysens S."/>
            <person name="Goosen C."/>
            <person name="Groot G.S.P."/>
            <person name="de Groot P.W.J."/>
            <person name="Guillemette T."/>
            <person name="Henrissat B."/>
            <person name="Herweijer M."/>
            <person name="van den Hombergh J.P.T.W."/>
            <person name="van den Hondel C.A.M.J.J."/>
            <person name="van der Heijden R.T.J.M."/>
            <person name="van der Kaaij R.M."/>
            <person name="Klis F.M."/>
            <person name="Kools H.J."/>
            <person name="Kubicek C.P."/>
            <person name="van Kuyk P.A."/>
            <person name="Lauber J."/>
            <person name="Lu X."/>
            <person name="van der Maarel M.J.E.C."/>
            <person name="Meulenberg R."/>
            <person name="Menke H."/>
            <person name="Mortimer M.A."/>
            <person name="Nielsen J."/>
            <person name="Oliver S.G."/>
            <person name="Olsthoorn M."/>
            <person name="Pal K."/>
            <person name="van Peij N.N.M.E."/>
            <person name="Ram A.F.J."/>
            <person name="Rinas U."/>
            <person name="Roubos J.A."/>
            <person name="Sagt C.M.J."/>
            <person name="Schmoll M."/>
            <person name="Sun J."/>
            <person name="Ussery D."/>
            <person name="Varga J."/>
            <person name="Vervecken W."/>
            <person name="van de Vondervoort P.J.J."/>
            <person name="Wedler H."/>
            <person name="Woesten H.A.B."/>
            <person name="Zeng A.-P."/>
            <person name="van Ooyen A.J.J."/>
            <person name="Visser J."/>
            <person name="Stam H."/>
        </authorList>
    </citation>
    <scope>NUCLEOTIDE SEQUENCE [LARGE SCALE GENOMIC DNA]</scope>
    <source>
        <strain>ATCC MYA-4892 / CBS 513.88 / FGSC A1513</strain>
    </source>
</reference>
<reference key="2">
    <citation type="journal article" date="2011" name="Biotechnol. Lett.">
        <title>Genome mining for the discovery of new nitrilases in filamentous fungi.</title>
        <authorList>
            <person name="Kaplan O."/>
            <person name="Bezouska K."/>
            <person name="Malandra A."/>
            <person name="Vesela A.B."/>
            <person name="Petrickova A."/>
            <person name="Felsberg J."/>
            <person name="Rinagelova A."/>
            <person name="Kren V."/>
            <person name="Martinkova L."/>
        </authorList>
    </citation>
    <scope>FUNCTION</scope>
    <scope>CATALYTIC ACTIVITY</scope>
</reference>
<reference key="3">
    <citation type="journal article" date="2012" name="Appl. Microbiol. Biotechnol.">
        <title>Purification and characterization of heterologously expressed nitrilases from filamentous fungi.</title>
        <authorList>
            <person name="Petrickova A."/>
            <person name="Vesela A.B."/>
            <person name="Kaplan O."/>
            <person name="Kubac D."/>
            <person name="Uhnakova B."/>
            <person name="Malandra A."/>
            <person name="Felsberg J."/>
            <person name="Rinagelova A."/>
            <person name="Weyrauch P."/>
            <person name="Kren V."/>
            <person name="Bezouska K."/>
            <person name="Martinkova L."/>
        </authorList>
    </citation>
    <scope>FUNCTION</scope>
    <scope>CATALYTIC ACTIVITY</scope>
    <scope>BIOPHYSICOCHEMICAL PROPERTIES</scope>
</reference>
<reference key="4">
    <citation type="journal article" date="2013" name="Mol. Biotechnol.">
        <title>A comparative study of nitrilases identified by genome mining.</title>
        <authorList>
            <person name="Kaplan O."/>
            <person name="Vesela A.B."/>
            <person name="Petrickova A."/>
            <person name="Pasquarelli F."/>
            <person name="Picmanova M."/>
            <person name="Rinagelova A."/>
            <person name="Bhalla T.C."/>
            <person name="Patek M."/>
            <person name="Martinkova L."/>
        </authorList>
    </citation>
    <scope>FUNCTION</scope>
    <scope>CATALYTIC ACTIVITY</scope>
</reference>
<organism evidence="9">
    <name type="scientific">Aspergillus niger (strain ATCC MYA-4892 / CBS 513.88 / FGSC A1513)</name>
    <dbReference type="NCBI Taxonomy" id="425011"/>
    <lineage>
        <taxon>Eukaryota</taxon>
        <taxon>Fungi</taxon>
        <taxon>Dikarya</taxon>
        <taxon>Ascomycota</taxon>
        <taxon>Pezizomycotina</taxon>
        <taxon>Eurotiomycetes</taxon>
        <taxon>Eurotiomycetidae</taxon>
        <taxon>Eurotiales</taxon>
        <taxon>Aspergillaceae</taxon>
        <taxon>Aspergillus</taxon>
        <taxon>Aspergillus subgen. Circumdati</taxon>
    </lineage>
</organism>
<feature type="chain" id="PRO_0000432173" description="Arylacetonitrilase">
    <location>
        <begin position="1"/>
        <end position="337"/>
    </location>
</feature>
<feature type="domain" description="CN hydrolase" evidence="1">
    <location>
        <begin position="7"/>
        <end position="278"/>
    </location>
</feature>
<feature type="region of interest" description="Disordered" evidence="2">
    <location>
        <begin position="311"/>
        <end position="337"/>
    </location>
</feature>
<feature type="active site" description="Proton acceptor" evidence="1">
    <location>
        <position position="47"/>
    </location>
</feature>
<feature type="active site" evidence="1">
    <location>
        <position position="127"/>
    </location>
</feature>
<feature type="active site" description="Nucleophile" evidence="1">
    <location>
        <position position="162"/>
    </location>
</feature>
<sequence>MTASTKVRVAVTQHEPVWLDLHATVDKTCRLIAEAAGNGAQLITFPECWLPGYPAWIWCRPVDMGLFTTYLKNSLSYDSEHMRRICNAAAQHKITVVLGLSERDGNSLYIGQCTIDSTGKIVMRRRKMKPTHMERTVFGESSGRSLLNVVDLPIGKVGALACWEHIQPLLKYHTMIQGEEIHVSAWPVLHPHMGGESLWGMSQEGGTGASQVYALESASFVLLTTAVLGPTCVKKMNLSPPWDTLGGGASAVIAPDGRRLTEPLPANEEGFVYADLDLDMILTCRHFVDACGHYSRPDLLWLGVDTREKTQHRPEGQADNAAYGLDVPSGLVEEEGA</sequence>
<accession>A2R6M7</accession>
<protein>
    <recommendedName>
        <fullName evidence="6 7">Arylacetonitrilase</fullName>
        <ecNumber evidence="4 5">3.5.5.1</ecNumber>
        <ecNumber evidence="4 5">3.5.5.5</ecNumber>
    </recommendedName>
    <alternativeName>
        <fullName evidence="7">NitAn</fullName>
    </alternativeName>
</protein>
<keyword id="KW-0378">Hydrolase</keyword>
<keyword id="KW-1185">Reference proteome</keyword>
<dbReference type="EC" id="3.5.5.1" evidence="4 5"/>
<dbReference type="EC" id="3.5.5.5" evidence="4 5"/>
<dbReference type="EMBL" id="AM270354">
    <property type="protein sequence ID" value="CAK46742.1"/>
    <property type="molecule type" value="Genomic_DNA"/>
</dbReference>
<dbReference type="RefSeq" id="XP_001397369.1">
    <property type="nucleotide sequence ID" value="XM_001397332.1"/>
</dbReference>
<dbReference type="SMR" id="A2R6M7"/>
<dbReference type="EnsemblFungi" id="CAK46742">
    <property type="protein sequence ID" value="CAK46742"/>
    <property type="gene ID" value="An16g00550"/>
</dbReference>
<dbReference type="GeneID" id="4988449"/>
<dbReference type="KEGG" id="ang:An16g00550"/>
<dbReference type="VEuPathDB" id="FungiDB:An16g00550"/>
<dbReference type="HOGENOM" id="CLU_030130_6_0_1"/>
<dbReference type="BRENDA" id="3.5.5.5">
    <property type="organism ID" value="518"/>
</dbReference>
<dbReference type="Proteomes" id="UP000006706">
    <property type="component" value="Chromosome 5R"/>
</dbReference>
<dbReference type="GO" id="GO:0047428">
    <property type="term" value="F:arylacetonitrilase activity"/>
    <property type="evidence" value="ECO:0007669"/>
    <property type="project" value="UniProtKB-EC"/>
</dbReference>
<dbReference type="GO" id="GO:0016836">
    <property type="term" value="F:hydro-lyase activity"/>
    <property type="evidence" value="ECO:0007669"/>
    <property type="project" value="UniProtKB-ARBA"/>
</dbReference>
<dbReference type="CDD" id="cd07564">
    <property type="entry name" value="nitrilases_CHs"/>
    <property type="match status" value="1"/>
</dbReference>
<dbReference type="Gene3D" id="3.60.110.10">
    <property type="entry name" value="Carbon-nitrogen hydrolase"/>
    <property type="match status" value="1"/>
</dbReference>
<dbReference type="InterPro" id="IPR003010">
    <property type="entry name" value="C-N_Hydrolase"/>
</dbReference>
<dbReference type="InterPro" id="IPR036526">
    <property type="entry name" value="C-N_Hydrolase_sf"/>
</dbReference>
<dbReference type="InterPro" id="IPR000132">
    <property type="entry name" value="Nitrilase/CN_hydratase_CS"/>
</dbReference>
<dbReference type="InterPro" id="IPR044149">
    <property type="entry name" value="Nitrilases_CHs"/>
</dbReference>
<dbReference type="PANTHER" id="PTHR46044:SF14">
    <property type="entry name" value="ARYLACETONITRILASE"/>
    <property type="match status" value="1"/>
</dbReference>
<dbReference type="PANTHER" id="PTHR46044">
    <property type="entry name" value="NITRILASE"/>
    <property type="match status" value="1"/>
</dbReference>
<dbReference type="Pfam" id="PF00795">
    <property type="entry name" value="CN_hydrolase"/>
    <property type="match status" value="1"/>
</dbReference>
<dbReference type="SUPFAM" id="SSF56317">
    <property type="entry name" value="Carbon-nitrogen hydrolase"/>
    <property type="match status" value="1"/>
</dbReference>
<dbReference type="PROSITE" id="PS50263">
    <property type="entry name" value="CN_HYDROLASE"/>
    <property type="match status" value="1"/>
</dbReference>
<dbReference type="PROSITE" id="PS00920">
    <property type="entry name" value="NITRIL_CHT_1"/>
    <property type="match status" value="1"/>
</dbReference>
<dbReference type="PROSITE" id="PS00921">
    <property type="entry name" value="NITRIL_CHT_2"/>
    <property type="match status" value="1"/>
</dbReference>
<comment type="function">
    <text evidence="3 4 5">Nitrilase that hydrolyzes preferentially phenylacetonitrile, but also (R,S)-mandelonitrile, and 2-phenylpropionitrile.</text>
</comment>
<comment type="catalytic activity">
    <reaction evidence="3 4 5">
        <text>a nitrile + 2 H2O = a carboxylate + NH4(+)</text>
        <dbReference type="Rhea" id="RHEA:21724"/>
        <dbReference type="ChEBI" id="CHEBI:15377"/>
        <dbReference type="ChEBI" id="CHEBI:18379"/>
        <dbReference type="ChEBI" id="CHEBI:28938"/>
        <dbReference type="ChEBI" id="CHEBI:29067"/>
        <dbReference type="EC" id="3.5.5.1"/>
    </reaction>
</comment>
<comment type="catalytic activity">
    <reaction evidence="3 4 5">
        <text>4-chlorophenylacetonitrile + 2 H2O = 4-chlorophenylacetate + NH4(+)</text>
        <dbReference type="Rhea" id="RHEA:20657"/>
        <dbReference type="ChEBI" id="CHEBI:15377"/>
        <dbReference type="ChEBI" id="CHEBI:16237"/>
        <dbReference type="ChEBI" id="CHEBI:17346"/>
        <dbReference type="ChEBI" id="CHEBI:28938"/>
        <dbReference type="EC" id="3.5.5.5"/>
    </reaction>
</comment>
<comment type="biophysicochemical properties">
    <kinetics>
        <KM evidence="4">3.4 mM for phenylacetonitrile</KM>
        <KM evidence="4">11.4 mM for (R,S)-mandelonitrile</KM>
        <KM evidence="4">0.8 mM for 2-phenylpropionitrile</KM>
        <Vmax evidence="4">10.6 umol/min/mg enzyme toward phenylacetonitrile</Vmax>
        <Vmax evidence="4">12.4 umol/min/mg enzyme toward (R,S)-mandelonitrile</Vmax>
        <Vmax evidence="4">0.35 umol/min/mg enzyme toward 2-phenylpropionitrile</Vmax>
    </kinetics>
    <phDependence>
        <text evidence="4">Optimum pH is 7.0-9.5.</text>
    </phDependence>
    <temperatureDependence>
        <text evidence="4">Optimum temperature is 38 degrees Celsius.</text>
    </temperatureDependence>
</comment>
<comment type="similarity">
    <text evidence="8">Belongs to the carbon-nitrogen hydrolase superfamily. Nitrilase family.</text>
</comment>
<proteinExistence type="evidence at protein level"/>
<evidence type="ECO:0000255" key="1">
    <source>
        <dbReference type="PROSITE-ProRule" id="PRU00054"/>
    </source>
</evidence>
<evidence type="ECO:0000256" key="2">
    <source>
        <dbReference type="SAM" id="MobiDB-lite"/>
    </source>
</evidence>
<evidence type="ECO:0000269" key="3">
    <source>
    </source>
</evidence>
<evidence type="ECO:0000269" key="4">
    <source>
    </source>
</evidence>
<evidence type="ECO:0000269" key="5">
    <source>
    </source>
</evidence>
<evidence type="ECO:0000303" key="6">
    <source>
    </source>
</evidence>
<evidence type="ECO:0000303" key="7">
    <source>
    </source>
</evidence>
<evidence type="ECO:0000305" key="8"/>
<evidence type="ECO:0000312" key="9">
    <source>
        <dbReference type="Proteomes" id="UP000006706"/>
    </source>
</evidence>
<gene>
    <name type="ORF">An16g00550</name>
</gene>
<name>NIT1_ASPNC</name>